<organism>
    <name type="scientific">Bacillus subtilis (strain 168)</name>
    <dbReference type="NCBI Taxonomy" id="224308"/>
    <lineage>
        <taxon>Bacteria</taxon>
        <taxon>Bacillati</taxon>
        <taxon>Bacillota</taxon>
        <taxon>Bacilli</taxon>
        <taxon>Bacillales</taxon>
        <taxon>Bacillaceae</taxon>
        <taxon>Bacillus</taxon>
    </lineage>
</organism>
<protein>
    <recommendedName>
        <fullName>Uncharacterized protein YoaF</fullName>
    </recommendedName>
</protein>
<keyword id="KW-1185">Reference proteome</keyword>
<reference key="1">
    <citation type="journal article" date="1997" name="Nature">
        <title>The complete genome sequence of the Gram-positive bacterium Bacillus subtilis.</title>
        <authorList>
            <person name="Kunst F."/>
            <person name="Ogasawara N."/>
            <person name="Moszer I."/>
            <person name="Albertini A.M."/>
            <person name="Alloni G."/>
            <person name="Azevedo V."/>
            <person name="Bertero M.G."/>
            <person name="Bessieres P."/>
            <person name="Bolotin A."/>
            <person name="Borchert S."/>
            <person name="Borriss R."/>
            <person name="Boursier L."/>
            <person name="Brans A."/>
            <person name="Braun M."/>
            <person name="Brignell S.C."/>
            <person name="Bron S."/>
            <person name="Brouillet S."/>
            <person name="Bruschi C.V."/>
            <person name="Caldwell B."/>
            <person name="Capuano V."/>
            <person name="Carter N.M."/>
            <person name="Choi S.-K."/>
            <person name="Codani J.-J."/>
            <person name="Connerton I.F."/>
            <person name="Cummings N.J."/>
            <person name="Daniel R.A."/>
            <person name="Denizot F."/>
            <person name="Devine K.M."/>
            <person name="Duesterhoeft A."/>
            <person name="Ehrlich S.D."/>
            <person name="Emmerson P.T."/>
            <person name="Entian K.-D."/>
            <person name="Errington J."/>
            <person name="Fabret C."/>
            <person name="Ferrari E."/>
            <person name="Foulger D."/>
            <person name="Fritz C."/>
            <person name="Fujita M."/>
            <person name="Fujita Y."/>
            <person name="Fuma S."/>
            <person name="Galizzi A."/>
            <person name="Galleron N."/>
            <person name="Ghim S.-Y."/>
            <person name="Glaser P."/>
            <person name="Goffeau A."/>
            <person name="Golightly E.J."/>
            <person name="Grandi G."/>
            <person name="Guiseppi G."/>
            <person name="Guy B.J."/>
            <person name="Haga K."/>
            <person name="Haiech J."/>
            <person name="Harwood C.R."/>
            <person name="Henaut A."/>
            <person name="Hilbert H."/>
            <person name="Holsappel S."/>
            <person name="Hosono S."/>
            <person name="Hullo M.-F."/>
            <person name="Itaya M."/>
            <person name="Jones L.-M."/>
            <person name="Joris B."/>
            <person name="Karamata D."/>
            <person name="Kasahara Y."/>
            <person name="Klaerr-Blanchard M."/>
            <person name="Klein C."/>
            <person name="Kobayashi Y."/>
            <person name="Koetter P."/>
            <person name="Koningstein G."/>
            <person name="Krogh S."/>
            <person name="Kumano M."/>
            <person name="Kurita K."/>
            <person name="Lapidus A."/>
            <person name="Lardinois S."/>
            <person name="Lauber J."/>
            <person name="Lazarevic V."/>
            <person name="Lee S.-M."/>
            <person name="Levine A."/>
            <person name="Liu H."/>
            <person name="Masuda S."/>
            <person name="Mauel C."/>
            <person name="Medigue C."/>
            <person name="Medina N."/>
            <person name="Mellado R.P."/>
            <person name="Mizuno M."/>
            <person name="Moestl D."/>
            <person name="Nakai S."/>
            <person name="Noback M."/>
            <person name="Noone D."/>
            <person name="O'Reilly M."/>
            <person name="Ogawa K."/>
            <person name="Ogiwara A."/>
            <person name="Oudega B."/>
            <person name="Park S.-H."/>
            <person name="Parro V."/>
            <person name="Pohl T.M."/>
            <person name="Portetelle D."/>
            <person name="Porwollik S."/>
            <person name="Prescott A.M."/>
            <person name="Presecan E."/>
            <person name="Pujic P."/>
            <person name="Purnelle B."/>
            <person name="Rapoport G."/>
            <person name="Rey M."/>
            <person name="Reynolds S."/>
            <person name="Rieger M."/>
            <person name="Rivolta C."/>
            <person name="Rocha E."/>
            <person name="Roche B."/>
            <person name="Rose M."/>
            <person name="Sadaie Y."/>
            <person name="Sato T."/>
            <person name="Scanlan E."/>
            <person name="Schleich S."/>
            <person name="Schroeter R."/>
            <person name="Scoffone F."/>
            <person name="Sekiguchi J."/>
            <person name="Sekowska A."/>
            <person name="Seror S.J."/>
            <person name="Serror P."/>
            <person name="Shin B.-S."/>
            <person name="Soldo B."/>
            <person name="Sorokin A."/>
            <person name="Tacconi E."/>
            <person name="Takagi T."/>
            <person name="Takahashi H."/>
            <person name="Takemaru K."/>
            <person name="Takeuchi M."/>
            <person name="Tamakoshi A."/>
            <person name="Tanaka T."/>
            <person name="Terpstra P."/>
            <person name="Tognoni A."/>
            <person name="Tosato V."/>
            <person name="Uchiyama S."/>
            <person name="Vandenbol M."/>
            <person name="Vannier F."/>
            <person name="Vassarotti A."/>
            <person name="Viari A."/>
            <person name="Wambutt R."/>
            <person name="Wedler E."/>
            <person name="Wedler H."/>
            <person name="Weitzenegger T."/>
            <person name="Winters P."/>
            <person name="Wipat A."/>
            <person name="Yamamoto H."/>
            <person name="Yamane K."/>
            <person name="Yasumoto K."/>
            <person name="Yata K."/>
            <person name="Yoshida K."/>
            <person name="Yoshikawa H.-F."/>
            <person name="Zumstein E."/>
            <person name="Yoshikawa H."/>
            <person name="Danchin A."/>
        </authorList>
    </citation>
    <scope>NUCLEOTIDE SEQUENCE [LARGE SCALE GENOMIC DNA]</scope>
    <source>
        <strain>168</strain>
    </source>
</reference>
<proteinExistence type="predicted"/>
<sequence length="97" mass="11104">MDVFLGIGIALAGYFIGEGLKQRNQTKGNEQNDIFLIKERDIYFYIGLFLGITTTEAKQLAGDMADLPYIEINGKKYVQKHMLKDWTFTLVEKHQGE</sequence>
<name>YOAF_BACSU</name>
<dbReference type="EMBL" id="AL009126">
    <property type="protein sequence ID" value="CAB13751.1"/>
    <property type="molecule type" value="Genomic_DNA"/>
</dbReference>
<dbReference type="PIR" id="H69895">
    <property type="entry name" value="H69895"/>
</dbReference>
<dbReference type="RefSeq" id="NP_389740.1">
    <property type="nucleotide sequence ID" value="NC_000964.3"/>
</dbReference>
<dbReference type="RefSeq" id="WP_003231432.1">
    <property type="nucleotide sequence ID" value="NZ_OZ025638.1"/>
</dbReference>
<dbReference type="FunCoup" id="O31829">
    <property type="interactions" value="20"/>
</dbReference>
<dbReference type="PaxDb" id="224308-BSU18580"/>
<dbReference type="EnsemblBacteria" id="CAB13751">
    <property type="protein sequence ID" value="CAB13751"/>
    <property type="gene ID" value="BSU_18580"/>
</dbReference>
<dbReference type="GeneID" id="940103"/>
<dbReference type="KEGG" id="bsu:BSU18580"/>
<dbReference type="PATRIC" id="fig|224308.179.peg.2025"/>
<dbReference type="InParanoid" id="O31829"/>
<dbReference type="OrthoDB" id="2361226at2"/>
<dbReference type="BioCyc" id="BSUB:BSU18580-MONOMER"/>
<dbReference type="Proteomes" id="UP000001570">
    <property type="component" value="Chromosome"/>
</dbReference>
<feature type="chain" id="PRO_0000049652" description="Uncharacterized protein YoaF">
    <location>
        <begin position="1"/>
        <end position="97"/>
    </location>
</feature>
<gene>
    <name type="primary">yoaF</name>
    <name type="ordered locus">BSU18580</name>
</gene>
<accession>O31829</accession>